<keyword id="KW-0903">Direct protein sequencing</keyword>
<keyword id="KW-1015">Disulfide bond</keyword>
<keyword id="KW-0964">Secreted</keyword>
<keyword id="KW-0800">Toxin</keyword>
<organism>
    <name type="scientific">Causus rhombeatus</name>
    <name type="common">Rhombic night adder</name>
    <dbReference type="NCBI Taxonomy" id="44735"/>
    <lineage>
        <taxon>Eukaryota</taxon>
        <taxon>Metazoa</taxon>
        <taxon>Chordata</taxon>
        <taxon>Craniata</taxon>
        <taxon>Vertebrata</taxon>
        <taxon>Euteleostomi</taxon>
        <taxon>Lepidosauria</taxon>
        <taxon>Squamata</taxon>
        <taxon>Bifurcata</taxon>
        <taxon>Unidentata</taxon>
        <taxon>Episquamata</taxon>
        <taxon>Toxicofera</taxon>
        <taxon>Serpentes</taxon>
        <taxon>Colubroidea</taxon>
        <taxon>Viperidae</taxon>
        <taxon>Viperinae</taxon>
        <taxon>Causus</taxon>
    </lineage>
</organism>
<dbReference type="SMR" id="P84716"/>
<dbReference type="TopDownProteomics" id="P84716"/>
<dbReference type="GO" id="GO:0005576">
    <property type="term" value="C:extracellular region"/>
    <property type="evidence" value="ECO:0007669"/>
    <property type="project" value="UniProtKB-SubCell"/>
</dbReference>
<dbReference type="GO" id="GO:0090729">
    <property type="term" value="F:toxin activity"/>
    <property type="evidence" value="ECO:0007669"/>
    <property type="project" value="UniProtKB-KW"/>
</dbReference>
<dbReference type="CDD" id="cd00206">
    <property type="entry name" value="TFP_snake_toxin"/>
    <property type="match status" value="1"/>
</dbReference>
<dbReference type="Gene3D" id="2.10.60.10">
    <property type="entry name" value="CD59"/>
    <property type="match status" value="1"/>
</dbReference>
<dbReference type="InterPro" id="IPR003571">
    <property type="entry name" value="Snake_3FTx"/>
</dbReference>
<dbReference type="InterPro" id="IPR045860">
    <property type="entry name" value="Snake_toxin-like_sf"/>
</dbReference>
<dbReference type="InterPro" id="IPR018354">
    <property type="entry name" value="Snake_toxin_con_site"/>
</dbReference>
<dbReference type="InterPro" id="IPR054131">
    <property type="entry name" value="Toxin_cobra-type"/>
</dbReference>
<dbReference type="Pfam" id="PF21947">
    <property type="entry name" value="Toxin_cobra-type"/>
    <property type="match status" value="1"/>
</dbReference>
<dbReference type="SUPFAM" id="SSF57302">
    <property type="entry name" value="Snake toxin-like"/>
    <property type="match status" value="1"/>
</dbReference>
<dbReference type="PROSITE" id="PS00272">
    <property type="entry name" value="SNAKE_TOXIN"/>
    <property type="match status" value="1"/>
</dbReference>
<sequence>MKCLTKYSRVSETSQTCHVWQNLCFKKWQKGKKVSRGCTATCPKPKKDEVIQCCAKDKCNK</sequence>
<evidence type="ECO:0000250" key="1">
    <source>
        <dbReference type="UniProtKB" id="P83346"/>
    </source>
</evidence>
<evidence type="ECO:0000269" key="2">
    <source ref="1"/>
</evidence>
<evidence type="ECO:0000305" key="3"/>
<name>3SO3_CAURH</name>
<protein>
    <recommendedName>
        <fullName>Neurotoxin-like protein 1</fullName>
    </recommendedName>
</protein>
<feature type="chain" id="PRO_0000093536" description="Neurotoxin-like protein 1" evidence="2">
    <location>
        <begin position="1"/>
        <end position="61"/>
    </location>
</feature>
<feature type="disulfide bond" evidence="1">
    <location>
        <begin position="3"/>
        <end position="24"/>
    </location>
</feature>
<feature type="disulfide bond" evidence="1">
    <location>
        <begin position="17"/>
        <end position="38"/>
    </location>
</feature>
<feature type="disulfide bond" evidence="1">
    <location>
        <begin position="42"/>
        <end position="53"/>
    </location>
</feature>
<feature type="disulfide bond" evidence="1">
    <location>
        <begin position="54"/>
        <end position="59"/>
    </location>
</feature>
<accession>P84716</accession>
<proteinExistence type="evidence at protein level"/>
<comment type="subcellular location">
    <subcellularLocation>
        <location evidence="2">Secreted</location>
    </subcellularLocation>
</comment>
<comment type="tissue specificity">
    <text evidence="3">Expressed by the venom gland.</text>
</comment>
<comment type="mass spectrometry"/>
<comment type="similarity">
    <text evidence="3">Belongs to the three-finger toxin family. Short-chain subfamily. Orphan group III sub-subfamily.</text>
</comment>
<reference key="1">
    <citation type="submission" date="2005-11" db="UniProtKB">
        <authorList>
            <person name="Doley R."/>
            <person name="Kini R.M."/>
        </authorList>
    </citation>
    <scope>PROTEIN SEQUENCE</scope>
    <scope>SUBCELLULAR LOCATION</scope>
    <scope>MASS SPECTROMETRY</scope>
    <source>
        <tissue>Venom</tissue>
    </source>
</reference>
<reference key="2">
    <citation type="journal article" date="2013" name="Proc. Natl. Acad. Sci. U.S.A.">
        <title>The king cobra genome reveals dynamic gene evolution and adaptation in the snake venom system.</title>
        <authorList>
            <person name="Vonk F.J."/>
            <person name="Casewell N.R."/>
            <person name="Henkel C.V."/>
            <person name="Heimberg A.M."/>
            <person name="Jansen H.J."/>
            <person name="McCleary R.J."/>
            <person name="Kerkkamp H.M."/>
            <person name="Vos R.A."/>
            <person name="Guerreiro I."/>
            <person name="Calvete J.J."/>
            <person name="Wuster W."/>
            <person name="Woods A.E."/>
            <person name="Logan J.M."/>
            <person name="Harrison R.A."/>
            <person name="Castoe T.A."/>
            <person name="de Koning A.P."/>
            <person name="Pollock D.D."/>
            <person name="Yandell M."/>
            <person name="Calderon D."/>
            <person name="Renjifo C."/>
            <person name="Currier R.B."/>
            <person name="Salgado D."/>
            <person name="Pla D."/>
            <person name="Sanz L."/>
            <person name="Hyder A.S."/>
            <person name="Ribeiro J.M."/>
            <person name="Arntzen J.W."/>
            <person name="van den Thillart G.E."/>
            <person name="Boetzer M."/>
            <person name="Pirovano W."/>
            <person name="Dirks R.P."/>
            <person name="Spaink H.P."/>
            <person name="Duboule D."/>
            <person name="McGlinn E."/>
            <person name="Kini R.M."/>
            <person name="Richardson M.K."/>
        </authorList>
    </citation>
    <scope>IDENTIFICATION BY MASS SPECTROMETRY</scope>
    <source>
        <tissue>Venom</tissue>
    </source>
</reference>